<organism>
    <name type="scientific">Salmonella enteritidis PT4 (strain P125109)</name>
    <dbReference type="NCBI Taxonomy" id="550537"/>
    <lineage>
        <taxon>Bacteria</taxon>
        <taxon>Pseudomonadati</taxon>
        <taxon>Pseudomonadota</taxon>
        <taxon>Gammaproteobacteria</taxon>
        <taxon>Enterobacterales</taxon>
        <taxon>Enterobacteriaceae</taxon>
        <taxon>Salmonella</taxon>
    </lineage>
</organism>
<gene>
    <name evidence="1" type="primary">queF</name>
    <name type="ordered locus">SEN2812</name>
</gene>
<name>QUEF_SALEP</name>
<feature type="chain" id="PRO_1000213077" description="NADPH-dependent 7-cyano-7-deazaguanine reductase">
    <location>
        <begin position="1"/>
        <end position="282"/>
    </location>
</feature>
<feature type="active site" description="Thioimide intermediate" evidence="1">
    <location>
        <position position="190"/>
    </location>
</feature>
<feature type="active site" description="Proton donor" evidence="1">
    <location>
        <position position="197"/>
    </location>
</feature>
<feature type="binding site" evidence="1">
    <location>
        <begin position="88"/>
        <end position="90"/>
    </location>
    <ligand>
        <name>substrate</name>
    </ligand>
</feature>
<feature type="binding site" evidence="1">
    <location>
        <begin position="90"/>
        <end position="91"/>
    </location>
    <ligand>
        <name>NADPH</name>
        <dbReference type="ChEBI" id="CHEBI:57783"/>
    </ligand>
</feature>
<feature type="binding site" evidence="1">
    <location>
        <begin position="229"/>
        <end position="230"/>
    </location>
    <ligand>
        <name>substrate</name>
    </ligand>
</feature>
<feature type="binding site" evidence="1">
    <location>
        <begin position="258"/>
        <end position="259"/>
    </location>
    <ligand>
        <name>NADPH</name>
        <dbReference type="ChEBI" id="CHEBI:57783"/>
    </ligand>
</feature>
<reference key="1">
    <citation type="journal article" date="2008" name="Genome Res.">
        <title>Comparative genome analysis of Salmonella enteritidis PT4 and Salmonella gallinarum 287/91 provides insights into evolutionary and host adaptation pathways.</title>
        <authorList>
            <person name="Thomson N.R."/>
            <person name="Clayton D.J."/>
            <person name="Windhorst D."/>
            <person name="Vernikos G."/>
            <person name="Davidson S."/>
            <person name="Churcher C."/>
            <person name="Quail M.A."/>
            <person name="Stevens M."/>
            <person name="Jones M.A."/>
            <person name="Watson M."/>
            <person name="Barron A."/>
            <person name="Layton A."/>
            <person name="Pickard D."/>
            <person name="Kingsley R.A."/>
            <person name="Bignell A."/>
            <person name="Clark L."/>
            <person name="Harris B."/>
            <person name="Ormond D."/>
            <person name="Abdellah Z."/>
            <person name="Brooks K."/>
            <person name="Cherevach I."/>
            <person name="Chillingworth T."/>
            <person name="Woodward J."/>
            <person name="Norberczak H."/>
            <person name="Lord A."/>
            <person name="Arrowsmith C."/>
            <person name="Jagels K."/>
            <person name="Moule S."/>
            <person name="Mungall K."/>
            <person name="Saunders M."/>
            <person name="Whitehead S."/>
            <person name="Chabalgoity J.A."/>
            <person name="Maskell D."/>
            <person name="Humphreys T."/>
            <person name="Roberts M."/>
            <person name="Barrow P.A."/>
            <person name="Dougan G."/>
            <person name="Parkhill J."/>
        </authorList>
    </citation>
    <scope>NUCLEOTIDE SEQUENCE [LARGE SCALE GENOMIC DNA]</scope>
    <source>
        <strain>P125109</strain>
    </source>
</reference>
<protein>
    <recommendedName>
        <fullName evidence="1">NADPH-dependent 7-cyano-7-deazaguanine reductase</fullName>
        <ecNumber evidence="1">1.7.1.13</ecNumber>
    </recommendedName>
    <alternativeName>
        <fullName evidence="1">7-cyano-7-carbaguanine reductase</fullName>
    </alternativeName>
    <alternativeName>
        <fullName evidence="1">NADPH-dependent nitrile oxidoreductase</fullName>
    </alternativeName>
    <alternativeName>
        <fullName evidence="1">PreQ(0) reductase</fullName>
    </alternativeName>
</protein>
<dbReference type="EC" id="1.7.1.13" evidence="1"/>
<dbReference type="EMBL" id="AM933172">
    <property type="protein sequence ID" value="CAR34391.1"/>
    <property type="molecule type" value="Genomic_DNA"/>
</dbReference>
<dbReference type="RefSeq" id="WP_000100463.1">
    <property type="nucleotide sequence ID" value="NC_011294.1"/>
</dbReference>
<dbReference type="SMR" id="B5QWQ2"/>
<dbReference type="KEGG" id="set:SEN2812"/>
<dbReference type="HOGENOM" id="CLU_054738_0_0_6"/>
<dbReference type="UniPathway" id="UPA00392"/>
<dbReference type="Proteomes" id="UP000000613">
    <property type="component" value="Chromosome"/>
</dbReference>
<dbReference type="GO" id="GO:0005737">
    <property type="term" value="C:cytoplasm"/>
    <property type="evidence" value="ECO:0007669"/>
    <property type="project" value="UniProtKB-SubCell"/>
</dbReference>
<dbReference type="GO" id="GO:0033739">
    <property type="term" value="F:preQ1 synthase activity"/>
    <property type="evidence" value="ECO:0007669"/>
    <property type="project" value="UniProtKB-UniRule"/>
</dbReference>
<dbReference type="GO" id="GO:0008616">
    <property type="term" value="P:queuosine biosynthetic process"/>
    <property type="evidence" value="ECO:0007669"/>
    <property type="project" value="UniProtKB-UniRule"/>
</dbReference>
<dbReference type="GO" id="GO:0006400">
    <property type="term" value="P:tRNA modification"/>
    <property type="evidence" value="ECO:0007669"/>
    <property type="project" value="UniProtKB-UniRule"/>
</dbReference>
<dbReference type="FunFam" id="3.30.1130.10:FF:000004">
    <property type="entry name" value="NADPH-dependent 7-cyano-7-deazaguanine reductase"/>
    <property type="match status" value="1"/>
</dbReference>
<dbReference type="Gene3D" id="3.30.1130.10">
    <property type="match status" value="2"/>
</dbReference>
<dbReference type="HAMAP" id="MF_00817">
    <property type="entry name" value="QueF_type2"/>
    <property type="match status" value="1"/>
</dbReference>
<dbReference type="InterPro" id="IPR043133">
    <property type="entry name" value="GTP-CH-I_C/QueF"/>
</dbReference>
<dbReference type="InterPro" id="IPR050084">
    <property type="entry name" value="NADPH_dep_7-cyano-7-deazaG_red"/>
</dbReference>
<dbReference type="InterPro" id="IPR029500">
    <property type="entry name" value="QueF"/>
</dbReference>
<dbReference type="InterPro" id="IPR029139">
    <property type="entry name" value="QueF_N"/>
</dbReference>
<dbReference type="InterPro" id="IPR016428">
    <property type="entry name" value="QueF_type2"/>
</dbReference>
<dbReference type="NCBIfam" id="TIGR03138">
    <property type="entry name" value="QueF"/>
    <property type="match status" value="1"/>
</dbReference>
<dbReference type="PANTHER" id="PTHR34354">
    <property type="entry name" value="NADPH-DEPENDENT 7-CYANO-7-DEAZAGUANINE REDUCTASE"/>
    <property type="match status" value="1"/>
</dbReference>
<dbReference type="PANTHER" id="PTHR34354:SF1">
    <property type="entry name" value="NADPH-DEPENDENT 7-CYANO-7-DEAZAGUANINE REDUCTASE"/>
    <property type="match status" value="1"/>
</dbReference>
<dbReference type="Pfam" id="PF14489">
    <property type="entry name" value="QueF"/>
    <property type="match status" value="1"/>
</dbReference>
<dbReference type="Pfam" id="PF14819">
    <property type="entry name" value="QueF_N"/>
    <property type="match status" value="1"/>
</dbReference>
<dbReference type="PIRSF" id="PIRSF004750">
    <property type="entry name" value="Nitrile_oxidored_YqcD_prd"/>
    <property type="match status" value="1"/>
</dbReference>
<dbReference type="SUPFAM" id="SSF55620">
    <property type="entry name" value="Tetrahydrobiopterin biosynthesis enzymes-like"/>
    <property type="match status" value="1"/>
</dbReference>
<keyword id="KW-0963">Cytoplasm</keyword>
<keyword id="KW-0521">NADP</keyword>
<keyword id="KW-0560">Oxidoreductase</keyword>
<keyword id="KW-0671">Queuosine biosynthesis</keyword>
<evidence type="ECO:0000255" key="1">
    <source>
        <dbReference type="HAMAP-Rule" id="MF_00817"/>
    </source>
</evidence>
<sequence>MSSYENHQALDGLTLGKSTDYRDNYDASLLQGVPRSLNRDPLGLTADNLPFHGADIWTLYELSWLNSQGLPQVAVGHVELDYTSVNLIESKSFKLYLNSFNQTRFDTWETVRQTLERDLRACAQGNVSVRLHRLDELEGQPVAHFHGTCIDDQDISIDNYQFTTDYLQHAVSGEKQVEETLVSHLLKSNCLITHQPDWGSIQIQYRGRKIDREKLLRYLVSFRHHNEFHEQCVERIFNDILRFCQPETLSVYARYTRRGGLDINPWRSNTDFVPATGRLARQ</sequence>
<proteinExistence type="inferred from homology"/>
<comment type="function">
    <text evidence="1">Catalyzes the NADPH-dependent reduction of 7-cyano-7-deazaguanine (preQ0) to 7-aminomethyl-7-deazaguanine (preQ1).</text>
</comment>
<comment type="catalytic activity">
    <reaction evidence="1">
        <text>7-aminomethyl-7-carbaguanine + 2 NADP(+) = 7-cyano-7-deazaguanine + 2 NADPH + 3 H(+)</text>
        <dbReference type="Rhea" id="RHEA:13409"/>
        <dbReference type="ChEBI" id="CHEBI:15378"/>
        <dbReference type="ChEBI" id="CHEBI:45075"/>
        <dbReference type="ChEBI" id="CHEBI:57783"/>
        <dbReference type="ChEBI" id="CHEBI:58349"/>
        <dbReference type="ChEBI" id="CHEBI:58703"/>
        <dbReference type="EC" id="1.7.1.13"/>
    </reaction>
</comment>
<comment type="pathway">
    <text evidence="1">tRNA modification; tRNA-queuosine biosynthesis.</text>
</comment>
<comment type="subunit">
    <text evidence="1">Homodimer.</text>
</comment>
<comment type="subcellular location">
    <subcellularLocation>
        <location evidence="1">Cytoplasm</location>
    </subcellularLocation>
</comment>
<comment type="similarity">
    <text evidence="1">Belongs to the GTP cyclohydrolase I family. QueF type 2 subfamily.</text>
</comment>
<accession>B5QWQ2</accession>